<sequence length="476" mass="53674">MARMADSKLVAAAPRPGRVAGSFRDPSGQVFHFQDRILRTMDSAAAIEFASAERVMRQLVDEGRLVDFSDAEPSLHQLFQGSIARVLQHPLLEQITYPYEWSFAGLKAAALFHLQLQLDLLDQGFCLSDATAYNVQFEGSRPTFIDHLSIKPYRDGQLWYGHKQFCEQFLVPLLLRSVFDITHHSWYRGNLEGVPSADFVKLLSTRHWFSHKLFMHIILPAKLQSSRTSQTKVDLGDSRARRLPKDAFRAMLAQLYSWISGLKVDVGKQSVWQGYAANNTYTATQRSDKGQYVAEFVAQHKPRTIIDLGCNTGDFSYVALENGAEKAIGFDFDPHALDAAFDRSVQTSKNFLPLYLDARNPSPSQGWGERERQGFSSRFSADAVLALAFEHHLAIAHNVPLAEVVAWVTQVAPKGIIEFVPKEDETVRRMLAGREDIFSDYNEEAFASALSQKARVVNKHLIPGSKRTLYTFERSE</sequence>
<name>NOEA_RHIME</name>
<dbReference type="EMBL" id="U26430">
    <property type="protein sequence ID" value="AAC44091.1"/>
    <property type="molecule type" value="Genomic_DNA"/>
</dbReference>
<dbReference type="EMBL" id="AE006469">
    <property type="protein sequence ID" value="AAK65074.1"/>
    <property type="molecule type" value="Genomic_DNA"/>
</dbReference>
<dbReference type="PIR" id="H95313">
    <property type="entry name" value="H95313"/>
</dbReference>
<dbReference type="PIR" id="S71360">
    <property type="entry name" value="S71360"/>
</dbReference>
<dbReference type="RefSeq" id="NP_435662.1">
    <property type="nucleotide sequence ID" value="NC_003037.1"/>
</dbReference>
<dbReference type="RefSeq" id="WP_010967406.1">
    <property type="nucleotide sequence ID" value="NC_003037.1"/>
</dbReference>
<dbReference type="EnsemblBacteria" id="AAK65074">
    <property type="protein sequence ID" value="AAK65074"/>
    <property type="gene ID" value="SMa0773"/>
</dbReference>
<dbReference type="KEGG" id="sme:SMa0773"/>
<dbReference type="PATRIC" id="fig|266834.11.peg.434"/>
<dbReference type="HOGENOM" id="CLU_047692_0_0_5"/>
<dbReference type="OrthoDB" id="9765084at2"/>
<dbReference type="Proteomes" id="UP000001976">
    <property type="component" value="Plasmid pSymA"/>
</dbReference>
<dbReference type="GO" id="GO:0008168">
    <property type="term" value="F:methyltransferase activity"/>
    <property type="evidence" value="ECO:0007669"/>
    <property type="project" value="InterPro"/>
</dbReference>
<dbReference type="GO" id="GO:0032259">
    <property type="term" value="P:methylation"/>
    <property type="evidence" value="ECO:0007669"/>
    <property type="project" value="InterPro"/>
</dbReference>
<dbReference type="CDD" id="cd02440">
    <property type="entry name" value="AdoMet_MTases"/>
    <property type="match status" value="1"/>
</dbReference>
<dbReference type="Gene3D" id="3.40.50.150">
    <property type="entry name" value="Vaccinia Virus protein VP39"/>
    <property type="match status" value="1"/>
</dbReference>
<dbReference type="InterPro" id="IPR002877">
    <property type="entry name" value="RNA_MeTrfase_FtsJ_dom"/>
</dbReference>
<dbReference type="InterPro" id="IPR029063">
    <property type="entry name" value="SAM-dependent_MTases_sf"/>
</dbReference>
<dbReference type="Pfam" id="PF01728">
    <property type="entry name" value="FtsJ"/>
    <property type="match status" value="1"/>
</dbReference>
<dbReference type="SUPFAM" id="SSF53335">
    <property type="entry name" value="S-adenosyl-L-methionine-dependent methyltransferases"/>
    <property type="match status" value="1"/>
</dbReference>
<geneLocation type="plasmid">
    <name>pSymA</name>
    <name>megaplasmid 1</name>
</geneLocation>
<feature type="chain" id="PRO_0000096920" description="Nodulation protein NoeA">
    <location>
        <begin position="1"/>
        <end position="476"/>
    </location>
</feature>
<reference key="1">
    <citation type="journal article" date="1995" name="Mol. Microbiol.">
        <title>In Rhizobium meliloti, the operon associated with the nod box n5 comprises nodL, noeA and noeB, three host-range genes specifically required for the nodulation of particular Medicago species.</title>
        <authorList>
            <person name="Ardourel M."/>
            <person name="Lortet G."/>
            <person name="Maillet F."/>
            <person name="Roche P."/>
            <person name="Truchet G."/>
            <person name="Prome J.-C."/>
            <person name="Rosenberg C."/>
        </authorList>
    </citation>
    <scope>NUCLEOTIDE SEQUENCE [GENOMIC DNA]</scope>
    <source>
        <strain>RCR2011 / SU47</strain>
    </source>
</reference>
<reference key="2">
    <citation type="journal article" date="2001" name="Proc. Natl. Acad. Sci. U.S.A.">
        <title>Nucleotide sequence and predicted functions of the entire Sinorhizobium meliloti pSymA megaplasmid.</title>
        <authorList>
            <person name="Barnett M.J."/>
            <person name="Fisher R.F."/>
            <person name="Jones T."/>
            <person name="Komp C."/>
            <person name="Abola A.P."/>
            <person name="Barloy-Hubler F."/>
            <person name="Bowser L."/>
            <person name="Capela D."/>
            <person name="Galibert F."/>
            <person name="Gouzy J."/>
            <person name="Gurjal M."/>
            <person name="Hong A."/>
            <person name="Huizar L."/>
            <person name="Hyman R.W."/>
            <person name="Kahn D."/>
            <person name="Kahn M.L."/>
            <person name="Kalman S."/>
            <person name="Keating D.H."/>
            <person name="Palm C."/>
            <person name="Peck M.C."/>
            <person name="Surzycki R."/>
            <person name="Wells D.H."/>
            <person name="Yeh K.-C."/>
            <person name="Davis R.W."/>
            <person name="Federspiel N.A."/>
            <person name="Long S.R."/>
        </authorList>
    </citation>
    <scope>NUCLEOTIDE SEQUENCE [LARGE SCALE GENOMIC DNA]</scope>
    <source>
        <strain>1021</strain>
    </source>
</reference>
<reference key="3">
    <citation type="journal article" date="2001" name="Science">
        <title>The composite genome of the legume symbiont Sinorhizobium meliloti.</title>
        <authorList>
            <person name="Galibert F."/>
            <person name="Finan T.M."/>
            <person name="Long S.R."/>
            <person name="Puehler A."/>
            <person name="Abola P."/>
            <person name="Ampe F."/>
            <person name="Barloy-Hubler F."/>
            <person name="Barnett M.J."/>
            <person name="Becker A."/>
            <person name="Boistard P."/>
            <person name="Bothe G."/>
            <person name="Boutry M."/>
            <person name="Bowser L."/>
            <person name="Buhrmester J."/>
            <person name="Cadieu E."/>
            <person name="Capela D."/>
            <person name="Chain P."/>
            <person name="Cowie A."/>
            <person name="Davis R.W."/>
            <person name="Dreano S."/>
            <person name="Federspiel N.A."/>
            <person name="Fisher R.F."/>
            <person name="Gloux S."/>
            <person name="Godrie T."/>
            <person name="Goffeau A."/>
            <person name="Golding B."/>
            <person name="Gouzy J."/>
            <person name="Gurjal M."/>
            <person name="Hernandez-Lucas I."/>
            <person name="Hong A."/>
            <person name="Huizar L."/>
            <person name="Hyman R.W."/>
            <person name="Jones T."/>
            <person name="Kahn D."/>
            <person name="Kahn M.L."/>
            <person name="Kalman S."/>
            <person name="Keating D.H."/>
            <person name="Kiss E."/>
            <person name="Komp C."/>
            <person name="Lelaure V."/>
            <person name="Masuy D."/>
            <person name="Palm C."/>
            <person name="Peck M.C."/>
            <person name="Pohl T.M."/>
            <person name="Portetelle D."/>
            <person name="Purnelle B."/>
            <person name="Ramsperger U."/>
            <person name="Surzycki R."/>
            <person name="Thebault P."/>
            <person name="Vandenbol M."/>
            <person name="Vorhoelter F.J."/>
            <person name="Weidner S."/>
            <person name="Wells D.H."/>
            <person name="Wong K."/>
            <person name="Yeh K.-C."/>
            <person name="Batut J."/>
        </authorList>
    </citation>
    <scope>NUCLEOTIDE SEQUENCE [LARGE SCALE GENOMIC DNA]</scope>
    <source>
        <strain>1021</strain>
    </source>
</reference>
<gene>
    <name type="primary">noeA</name>
    <name type="ordered locus">RA0416</name>
    <name type="ORF">SMa0773</name>
</gene>
<protein>
    <recommendedName>
        <fullName>Nodulation protein NoeA</fullName>
    </recommendedName>
</protein>
<organism>
    <name type="scientific">Rhizobium meliloti (strain 1021)</name>
    <name type="common">Ensifer meliloti</name>
    <name type="synonym">Sinorhizobium meliloti</name>
    <dbReference type="NCBI Taxonomy" id="266834"/>
    <lineage>
        <taxon>Bacteria</taxon>
        <taxon>Pseudomonadati</taxon>
        <taxon>Pseudomonadota</taxon>
        <taxon>Alphaproteobacteria</taxon>
        <taxon>Hyphomicrobiales</taxon>
        <taxon>Rhizobiaceae</taxon>
        <taxon>Sinorhizobium/Ensifer group</taxon>
        <taxon>Sinorhizobium</taxon>
    </lineage>
</organism>
<accession>Q52892</accession>
<proteinExistence type="predicted"/>
<comment type="function">
    <text>Not known; does not seem to participate in nod factor synthesis but required for nodulation on some specific Medicago species such as M.littoralis.</text>
</comment>
<keyword id="KW-0536">Nodulation</keyword>
<keyword id="KW-0614">Plasmid</keyword>
<keyword id="KW-1185">Reference proteome</keyword>